<name>HLDE_ALIB4</name>
<dbReference type="EC" id="2.7.1.167" evidence="1"/>
<dbReference type="EC" id="2.7.7.70" evidence="1"/>
<dbReference type="EMBL" id="CP000361">
    <property type="protein sequence ID" value="ABV68037.1"/>
    <property type="status" value="ALT_INIT"/>
    <property type="molecule type" value="Genomic_DNA"/>
</dbReference>
<dbReference type="SMR" id="A8EVR4"/>
<dbReference type="STRING" id="367737.Abu_1797"/>
<dbReference type="GeneID" id="24303993"/>
<dbReference type="KEGG" id="abu:Abu_1797"/>
<dbReference type="eggNOG" id="COG0615">
    <property type="taxonomic scope" value="Bacteria"/>
</dbReference>
<dbReference type="eggNOG" id="COG2870">
    <property type="taxonomic scope" value="Bacteria"/>
</dbReference>
<dbReference type="HOGENOM" id="CLU_021150_2_1_7"/>
<dbReference type="UniPathway" id="UPA00356">
    <property type="reaction ID" value="UER00437"/>
</dbReference>
<dbReference type="UniPathway" id="UPA00356">
    <property type="reaction ID" value="UER00439"/>
</dbReference>
<dbReference type="Proteomes" id="UP000001136">
    <property type="component" value="Chromosome"/>
</dbReference>
<dbReference type="GO" id="GO:0005829">
    <property type="term" value="C:cytosol"/>
    <property type="evidence" value="ECO:0007669"/>
    <property type="project" value="TreeGrafter"/>
</dbReference>
<dbReference type="GO" id="GO:0005524">
    <property type="term" value="F:ATP binding"/>
    <property type="evidence" value="ECO:0007669"/>
    <property type="project" value="UniProtKB-UniRule"/>
</dbReference>
<dbReference type="GO" id="GO:0033785">
    <property type="term" value="F:heptose 7-phosphate kinase activity"/>
    <property type="evidence" value="ECO:0007669"/>
    <property type="project" value="UniProtKB-UniRule"/>
</dbReference>
<dbReference type="GO" id="GO:0033786">
    <property type="term" value="F:heptose-1-phosphate adenylyltransferase activity"/>
    <property type="evidence" value="ECO:0007669"/>
    <property type="project" value="UniProtKB-UniRule"/>
</dbReference>
<dbReference type="GO" id="GO:0016773">
    <property type="term" value="F:phosphotransferase activity, alcohol group as acceptor"/>
    <property type="evidence" value="ECO:0007669"/>
    <property type="project" value="InterPro"/>
</dbReference>
<dbReference type="GO" id="GO:0097171">
    <property type="term" value="P:ADP-L-glycero-beta-D-manno-heptose biosynthetic process"/>
    <property type="evidence" value="ECO:0007669"/>
    <property type="project" value="UniProtKB-UniPathway"/>
</dbReference>
<dbReference type="CDD" id="cd01172">
    <property type="entry name" value="RfaE_like"/>
    <property type="match status" value="1"/>
</dbReference>
<dbReference type="FunFam" id="3.40.1190.20:FF:000002">
    <property type="entry name" value="Bifunctional protein HldE"/>
    <property type="match status" value="1"/>
</dbReference>
<dbReference type="Gene3D" id="3.40.1190.20">
    <property type="match status" value="1"/>
</dbReference>
<dbReference type="Gene3D" id="3.40.50.620">
    <property type="entry name" value="HUPs"/>
    <property type="match status" value="1"/>
</dbReference>
<dbReference type="HAMAP" id="MF_01603">
    <property type="entry name" value="HldE"/>
    <property type="match status" value="1"/>
</dbReference>
<dbReference type="InterPro" id="IPR023030">
    <property type="entry name" value="Bifunc_HldE"/>
</dbReference>
<dbReference type="InterPro" id="IPR004821">
    <property type="entry name" value="Cyt_trans-like"/>
</dbReference>
<dbReference type="InterPro" id="IPR011611">
    <property type="entry name" value="PfkB_dom"/>
</dbReference>
<dbReference type="InterPro" id="IPR011913">
    <property type="entry name" value="RfaE_dom_I"/>
</dbReference>
<dbReference type="InterPro" id="IPR011914">
    <property type="entry name" value="RfaE_dom_II"/>
</dbReference>
<dbReference type="InterPro" id="IPR029056">
    <property type="entry name" value="Ribokinase-like"/>
</dbReference>
<dbReference type="InterPro" id="IPR014729">
    <property type="entry name" value="Rossmann-like_a/b/a_fold"/>
</dbReference>
<dbReference type="NCBIfam" id="TIGR00125">
    <property type="entry name" value="cyt_tran_rel"/>
    <property type="match status" value="1"/>
</dbReference>
<dbReference type="NCBIfam" id="TIGR02198">
    <property type="entry name" value="rfaE_dom_I"/>
    <property type="match status" value="1"/>
</dbReference>
<dbReference type="NCBIfam" id="TIGR02199">
    <property type="entry name" value="rfaE_dom_II"/>
    <property type="match status" value="1"/>
</dbReference>
<dbReference type="PANTHER" id="PTHR46969">
    <property type="entry name" value="BIFUNCTIONAL PROTEIN HLDE"/>
    <property type="match status" value="1"/>
</dbReference>
<dbReference type="PANTHER" id="PTHR46969:SF1">
    <property type="entry name" value="BIFUNCTIONAL PROTEIN HLDE"/>
    <property type="match status" value="1"/>
</dbReference>
<dbReference type="Pfam" id="PF01467">
    <property type="entry name" value="CTP_transf_like"/>
    <property type="match status" value="1"/>
</dbReference>
<dbReference type="Pfam" id="PF00294">
    <property type="entry name" value="PfkB"/>
    <property type="match status" value="1"/>
</dbReference>
<dbReference type="SUPFAM" id="SSF52374">
    <property type="entry name" value="Nucleotidylyl transferase"/>
    <property type="match status" value="1"/>
</dbReference>
<dbReference type="SUPFAM" id="SSF53613">
    <property type="entry name" value="Ribokinase-like"/>
    <property type="match status" value="1"/>
</dbReference>
<comment type="function">
    <text evidence="1">Catalyzes the phosphorylation of D-glycero-D-manno-heptose 7-phosphate at the C-1 position to selectively form D-glycero-beta-D-manno-heptose-1,7-bisphosphate.</text>
</comment>
<comment type="function">
    <text evidence="1">Catalyzes the ADP transfer from ATP to D-glycero-beta-D-manno-heptose 1-phosphate, yielding ADP-D-glycero-beta-D-manno-heptose.</text>
</comment>
<comment type="catalytic activity">
    <reaction evidence="1">
        <text>D-glycero-beta-D-manno-heptose 7-phosphate + ATP = D-glycero-beta-D-manno-heptose 1,7-bisphosphate + ADP + H(+)</text>
        <dbReference type="Rhea" id="RHEA:27473"/>
        <dbReference type="ChEBI" id="CHEBI:15378"/>
        <dbReference type="ChEBI" id="CHEBI:30616"/>
        <dbReference type="ChEBI" id="CHEBI:60204"/>
        <dbReference type="ChEBI" id="CHEBI:60208"/>
        <dbReference type="ChEBI" id="CHEBI:456216"/>
        <dbReference type="EC" id="2.7.1.167"/>
    </reaction>
</comment>
<comment type="catalytic activity">
    <reaction evidence="1">
        <text>D-glycero-beta-D-manno-heptose 1-phosphate + ATP + H(+) = ADP-D-glycero-beta-D-manno-heptose + diphosphate</text>
        <dbReference type="Rhea" id="RHEA:27465"/>
        <dbReference type="ChEBI" id="CHEBI:15378"/>
        <dbReference type="ChEBI" id="CHEBI:30616"/>
        <dbReference type="ChEBI" id="CHEBI:33019"/>
        <dbReference type="ChEBI" id="CHEBI:59967"/>
        <dbReference type="ChEBI" id="CHEBI:61593"/>
        <dbReference type="EC" id="2.7.7.70"/>
    </reaction>
</comment>
<comment type="pathway">
    <text evidence="1">Nucleotide-sugar biosynthesis; ADP-L-glycero-beta-D-manno-heptose biosynthesis; ADP-L-glycero-beta-D-manno-heptose from D-glycero-beta-D-manno-heptose 7-phosphate: step 1/4.</text>
</comment>
<comment type="pathway">
    <text evidence="1">Nucleotide-sugar biosynthesis; ADP-L-glycero-beta-D-manno-heptose biosynthesis; ADP-L-glycero-beta-D-manno-heptose from D-glycero-beta-D-manno-heptose 7-phosphate: step 3/4.</text>
</comment>
<comment type="subunit">
    <text evidence="1">Homodimer.</text>
</comment>
<comment type="similarity">
    <text evidence="1">In the N-terminal section; belongs to the carbohydrate kinase PfkB family.</text>
</comment>
<comment type="similarity">
    <text evidence="1">In the C-terminal section; belongs to the cytidylyltransferase family.</text>
</comment>
<comment type="sequence caution" evidence="2">
    <conflict type="erroneous initiation">
        <sequence resource="EMBL-CDS" id="ABV68037"/>
    </conflict>
</comment>
<reference key="1">
    <citation type="journal article" date="2007" name="PLoS ONE">
        <title>The complete genome sequence and analysis of the Epsilonproteobacterium Arcobacter butzleri.</title>
        <authorList>
            <person name="Miller W.G."/>
            <person name="Parker C.T."/>
            <person name="Rubenfield M."/>
            <person name="Mendz G.L."/>
            <person name="Woesten M.M.S.M."/>
            <person name="Ussery D.W."/>
            <person name="Stolz J.F."/>
            <person name="Binnewies T.T."/>
            <person name="Hallin P.F."/>
            <person name="Wang G."/>
            <person name="Malek J.A."/>
            <person name="Rogosin A."/>
            <person name="Stanker L.H."/>
            <person name="Mandrell R.E."/>
        </authorList>
    </citation>
    <scope>NUCLEOTIDE SEQUENCE [LARGE SCALE GENOMIC DNA]</scope>
    <source>
        <strain>RM4018</strain>
    </source>
</reference>
<feature type="chain" id="PRO_0000335553" description="Bifunctional protein HldE">
    <location>
        <begin position="1"/>
        <end position="476"/>
    </location>
</feature>
<feature type="region of interest" description="Ribokinase">
    <location>
        <begin position="1"/>
        <end position="318"/>
    </location>
</feature>
<feature type="region of interest" description="Cytidylyltransferase">
    <location>
        <begin position="345"/>
        <end position="476"/>
    </location>
</feature>
<feature type="active site" evidence="1">
    <location>
        <position position="263"/>
    </location>
</feature>
<feature type="binding site" evidence="1">
    <location>
        <begin position="195"/>
        <end position="198"/>
    </location>
    <ligand>
        <name>ATP</name>
        <dbReference type="ChEBI" id="CHEBI:30616"/>
    </ligand>
</feature>
<protein>
    <recommendedName>
        <fullName evidence="1">Bifunctional protein HldE</fullName>
    </recommendedName>
    <domain>
        <recommendedName>
            <fullName evidence="1">D-beta-D-heptose 7-phosphate kinase</fullName>
            <ecNumber evidence="1">2.7.1.167</ecNumber>
        </recommendedName>
        <alternativeName>
            <fullName evidence="1">D-beta-D-heptose 7-phosphotransferase</fullName>
        </alternativeName>
        <alternativeName>
            <fullName evidence="1">D-glycero-beta-D-manno-heptose-7-phosphate kinase</fullName>
        </alternativeName>
    </domain>
    <domain>
        <recommendedName>
            <fullName evidence="1">D-beta-D-heptose 1-phosphate adenylyltransferase</fullName>
            <ecNumber evidence="1">2.7.7.70</ecNumber>
        </recommendedName>
        <alternativeName>
            <fullName evidence="1">D-glycero-beta-D-manno-heptose 1-phosphate adenylyltransferase</fullName>
        </alternativeName>
    </domain>
</protein>
<gene>
    <name evidence="1" type="primary">hldE</name>
    <name type="ordered locus">Abu_1797</name>
</gene>
<evidence type="ECO:0000255" key="1">
    <source>
        <dbReference type="HAMAP-Rule" id="MF_01603"/>
    </source>
</evidence>
<evidence type="ECO:0000305" key="2"/>
<keyword id="KW-0067">ATP-binding</keyword>
<keyword id="KW-0119">Carbohydrate metabolism</keyword>
<keyword id="KW-0418">Kinase</keyword>
<keyword id="KW-0511">Multifunctional enzyme</keyword>
<keyword id="KW-0547">Nucleotide-binding</keyword>
<keyword id="KW-0548">Nucleotidyltransferase</keyword>
<keyword id="KW-1185">Reference proteome</keyword>
<keyword id="KW-0808">Transferase</keyword>
<organism>
    <name type="scientific">Aliarcobacter butzleri (strain RM4018)</name>
    <name type="common">Arcobacter butzleri</name>
    <dbReference type="NCBI Taxonomy" id="367737"/>
    <lineage>
        <taxon>Bacteria</taxon>
        <taxon>Pseudomonadati</taxon>
        <taxon>Campylobacterota</taxon>
        <taxon>Epsilonproteobacteria</taxon>
        <taxon>Campylobacterales</taxon>
        <taxon>Arcobacteraceae</taxon>
        <taxon>Aliarcobacter</taxon>
    </lineage>
</organism>
<proteinExistence type="inferred from homology"/>
<accession>A8EVR4</accession>
<sequence>MLSKKPNILVIGDLMIDHYLWGSCDRISPEAPVQVVNVKKESSVLGGAGNVINNLFTLGTTVDVISVIGDDNVANELKSLLEKIKISTSNLIVENNRKTSKKSRLIASQQQVLRYDMESIDDINEESHKKIISNLEKNIKKYSSIILSDYGKGVLTTKLTQDIINIANKNSVKVLVDPKGKDYSKYKGSYTLTPNKKEAQEATNIDIKDENSLINALKDLKEKCDLEVSLITLSEQGIAIFDENLTIKPTVAREVYDVTGAGDTVIASIAFALGNDLNINEAVSFANLAAGVVVGKLGSATTTLDEIYEYESSLHKSNSNSHIKTFEEIEKLAAKLHNLGKKIVFTNGCFDILHVGHVKYLEEARSYGDVLILGLNADSSVKKLKGESRPINNQDDRAYILASLESVDYVVIFEEETPYELIKLIKPHVLVKGGDYEGKDVVGQDIADELKLVKFVDGKSTTNTIKRIQENEKCNN</sequence>